<name>PFDA_METMJ</name>
<reference key="1">
    <citation type="journal article" date="2009" name="Stand. Genomic Sci.">
        <title>Complete genome sequence of Methanoculleus marisnigri Romesser et al. 1981 type strain JR1.</title>
        <authorList>
            <person name="Anderson I.J."/>
            <person name="Sieprawska-Lupa M."/>
            <person name="Lapidus A."/>
            <person name="Nolan M."/>
            <person name="Copeland A."/>
            <person name="Glavina Del Rio T."/>
            <person name="Tice H."/>
            <person name="Dalin E."/>
            <person name="Barry K."/>
            <person name="Saunders E."/>
            <person name="Han C."/>
            <person name="Brettin T."/>
            <person name="Detter J.C."/>
            <person name="Bruce D."/>
            <person name="Mikhailova N."/>
            <person name="Pitluck S."/>
            <person name="Hauser L."/>
            <person name="Land M."/>
            <person name="Lucas S."/>
            <person name="Richardson P."/>
            <person name="Whitman W.B."/>
            <person name="Kyrpides N.C."/>
        </authorList>
    </citation>
    <scope>NUCLEOTIDE SEQUENCE [LARGE SCALE GENOMIC DNA]</scope>
    <source>
        <strain>ATCC 35101 / DSM 1498 / JR1</strain>
    </source>
</reference>
<organism>
    <name type="scientific">Methanoculleus marisnigri (strain ATCC 35101 / DSM 1498 / JR1)</name>
    <dbReference type="NCBI Taxonomy" id="368407"/>
    <lineage>
        <taxon>Archaea</taxon>
        <taxon>Methanobacteriati</taxon>
        <taxon>Methanobacteriota</taxon>
        <taxon>Stenosarchaea group</taxon>
        <taxon>Methanomicrobia</taxon>
        <taxon>Methanomicrobiales</taxon>
        <taxon>Methanomicrobiaceae</taxon>
        <taxon>Methanoculleus</taxon>
    </lineage>
</organism>
<comment type="function">
    <text evidence="1">Molecular chaperone capable of stabilizing a range of proteins. Seems to fulfill an ATP-independent, HSP70-like function in archaeal de novo protein folding.</text>
</comment>
<comment type="subunit">
    <text evidence="1">Heterohexamer of two alpha and four beta subunits.</text>
</comment>
<comment type="subcellular location">
    <subcellularLocation>
        <location evidence="1">Cytoplasm</location>
    </subcellularLocation>
</comment>
<comment type="similarity">
    <text evidence="1">Belongs to the prefoldin alpha subunit family.</text>
</comment>
<proteinExistence type="inferred from homology"/>
<evidence type="ECO:0000255" key="1">
    <source>
        <dbReference type="HAMAP-Rule" id="MF_00308"/>
    </source>
</evidence>
<keyword id="KW-0143">Chaperone</keyword>
<keyword id="KW-0963">Cytoplasm</keyword>
<protein>
    <recommendedName>
        <fullName evidence="1">Prefoldin subunit alpha</fullName>
    </recommendedName>
    <alternativeName>
        <fullName evidence="1">GimC subunit alpha</fullName>
    </alternativeName>
</protein>
<sequence>MDQADPREIQTLQMYLNEYGQQIELMTQQLSMIEQQRLEGTAAIETLRALQENADGAVLLPIGGGAYLRVKVLDAGHVLVNIGADVSVERATADAVGYLEDRITELEALAKKVAGSVEQLQGQATEISRRLEAAYRGARQAQAGQGGSS</sequence>
<accession>A3CWZ2</accession>
<gene>
    <name evidence="1" type="primary">pfdA</name>
    <name type="ordered locus">Memar_1966</name>
</gene>
<dbReference type="EMBL" id="CP000562">
    <property type="protein sequence ID" value="ABN57892.1"/>
    <property type="molecule type" value="Genomic_DNA"/>
</dbReference>
<dbReference type="RefSeq" id="WP_011844801.1">
    <property type="nucleotide sequence ID" value="NC_009051.1"/>
</dbReference>
<dbReference type="SMR" id="A3CWZ2"/>
<dbReference type="STRING" id="368407.Memar_1966"/>
<dbReference type="GeneID" id="4847712"/>
<dbReference type="GeneID" id="76730043"/>
<dbReference type="KEGG" id="mem:Memar_1966"/>
<dbReference type="eggNOG" id="arCOG01341">
    <property type="taxonomic scope" value="Archaea"/>
</dbReference>
<dbReference type="HOGENOM" id="CLU_091867_1_3_2"/>
<dbReference type="OrthoDB" id="10045at2157"/>
<dbReference type="Proteomes" id="UP000002146">
    <property type="component" value="Chromosome"/>
</dbReference>
<dbReference type="GO" id="GO:0005737">
    <property type="term" value="C:cytoplasm"/>
    <property type="evidence" value="ECO:0007669"/>
    <property type="project" value="UniProtKB-SubCell"/>
</dbReference>
<dbReference type="GO" id="GO:0016272">
    <property type="term" value="C:prefoldin complex"/>
    <property type="evidence" value="ECO:0007669"/>
    <property type="project" value="UniProtKB-UniRule"/>
</dbReference>
<dbReference type="GO" id="GO:0051082">
    <property type="term" value="F:unfolded protein binding"/>
    <property type="evidence" value="ECO:0007669"/>
    <property type="project" value="UniProtKB-UniRule"/>
</dbReference>
<dbReference type="GO" id="GO:0006457">
    <property type="term" value="P:protein folding"/>
    <property type="evidence" value="ECO:0007669"/>
    <property type="project" value="UniProtKB-UniRule"/>
</dbReference>
<dbReference type="CDD" id="cd23160">
    <property type="entry name" value="Prefoldin_alpha_GimC"/>
    <property type="match status" value="1"/>
</dbReference>
<dbReference type="Gene3D" id="1.10.287.370">
    <property type="match status" value="1"/>
</dbReference>
<dbReference type="HAMAP" id="MF_00308">
    <property type="entry name" value="PfdA"/>
    <property type="match status" value="1"/>
</dbReference>
<dbReference type="InterPro" id="IPR011599">
    <property type="entry name" value="PFD_alpha_archaea"/>
</dbReference>
<dbReference type="InterPro" id="IPR009053">
    <property type="entry name" value="Prefoldin"/>
</dbReference>
<dbReference type="InterPro" id="IPR004127">
    <property type="entry name" value="Prefoldin_subunit_alpha"/>
</dbReference>
<dbReference type="NCBIfam" id="TIGR00293">
    <property type="entry name" value="prefoldin subunit alpha"/>
    <property type="match status" value="1"/>
</dbReference>
<dbReference type="PANTHER" id="PTHR12674">
    <property type="entry name" value="PREFOLDIN SUBUNIT 5"/>
    <property type="match status" value="1"/>
</dbReference>
<dbReference type="PANTHER" id="PTHR12674:SF2">
    <property type="entry name" value="PREFOLDIN SUBUNIT 5"/>
    <property type="match status" value="1"/>
</dbReference>
<dbReference type="Pfam" id="PF02996">
    <property type="entry name" value="Prefoldin"/>
    <property type="match status" value="1"/>
</dbReference>
<dbReference type="SUPFAM" id="SSF46579">
    <property type="entry name" value="Prefoldin"/>
    <property type="match status" value="1"/>
</dbReference>
<feature type="chain" id="PRO_0000322254" description="Prefoldin subunit alpha">
    <location>
        <begin position="1"/>
        <end position="149"/>
    </location>
</feature>